<organism>
    <name type="scientific">Methanobrevibacter smithii (strain ATCC 35061 / DSM 861 / OCM 144 / PS)</name>
    <dbReference type="NCBI Taxonomy" id="420247"/>
    <lineage>
        <taxon>Archaea</taxon>
        <taxon>Methanobacteriati</taxon>
        <taxon>Methanobacteriota</taxon>
        <taxon>Methanomada group</taxon>
        <taxon>Methanobacteria</taxon>
        <taxon>Methanobacteriales</taxon>
        <taxon>Methanobacteriaceae</taxon>
        <taxon>Methanobrevibacter</taxon>
    </lineage>
</organism>
<reference key="1">
    <citation type="journal article" date="2007" name="Proc. Natl. Acad. Sci. U.S.A.">
        <title>Genomic and metabolic adaptations of Methanobrevibacter smithii to the human gut.</title>
        <authorList>
            <person name="Samuel B.S."/>
            <person name="Hansen E.E."/>
            <person name="Manchester J.K."/>
            <person name="Coutinho P.M."/>
            <person name="Henrissat B."/>
            <person name="Fulton R."/>
            <person name="Latreille P."/>
            <person name="Kim K."/>
            <person name="Wilson R.K."/>
            <person name="Gordon J.I."/>
        </authorList>
    </citation>
    <scope>NUCLEOTIDE SEQUENCE [LARGE SCALE GENOMIC DNA]</scope>
    <source>
        <strain>ATCC 35061 / DSM 861 / OCM 144 / PS</strain>
    </source>
</reference>
<keyword id="KW-0963">Cytoplasm</keyword>
<keyword id="KW-0255">Endonuclease</keyword>
<keyword id="KW-0378">Hydrolase</keyword>
<keyword id="KW-0464">Manganese</keyword>
<keyword id="KW-0479">Metal-binding</keyword>
<keyword id="KW-0540">Nuclease</keyword>
<feature type="chain" id="PRO_0000334977" description="Ribonuclease HII">
    <location>
        <begin position="1"/>
        <end position="207"/>
    </location>
</feature>
<feature type="domain" description="RNase H type-2" evidence="2">
    <location>
        <begin position="1"/>
        <end position="207"/>
    </location>
</feature>
<feature type="binding site" evidence="1">
    <location>
        <position position="7"/>
    </location>
    <ligand>
        <name>a divalent metal cation</name>
        <dbReference type="ChEBI" id="CHEBI:60240"/>
    </ligand>
</feature>
<feature type="binding site" evidence="1">
    <location>
        <position position="8"/>
    </location>
    <ligand>
        <name>a divalent metal cation</name>
        <dbReference type="ChEBI" id="CHEBI:60240"/>
    </ligand>
</feature>
<feature type="binding site" evidence="1">
    <location>
        <position position="105"/>
    </location>
    <ligand>
        <name>a divalent metal cation</name>
        <dbReference type="ChEBI" id="CHEBI:60240"/>
    </ligand>
</feature>
<proteinExistence type="inferred from homology"/>
<evidence type="ECO:0000255" key="1">
    <source>
        <dbReference type="HAMAP-Rule" id="MF_00052"/>
    </source>
</evidence>
<evidence type="ECO:0000255" key="2">
    <source>
        <dbReference type="PROSITE-ProRule" id="PRU01319"/>
    </source>
</evidence>
<name>RNH2_METS3</name>
<dbReference type="EC" id="3.1.26.4" evidence="1"/>
<dbReference type="EMBL" id="CP000678">
    <property type="protein sequence ID" value="ABQ87184.1"/>
    <property type="molecule type" value="Genomic_DNA"/>
</dbReference>
<dbReference type="RefSeq" id="WP_004032956.1">
    <property type="nucleotide sequence ID" value="NZ_CP117965.1"/>
</dbReference>
<dbReference type="SMR" id="A5ULV6"/>
<dbReference type="STRING" id="420247.Msm_0979"/>
<dbReference type="EnsemblBacteria" id="ABQ87184">
    <property type="protein sequence ID" value="ABQ87184"/>
    <property type="gene ID" value="Msm_0979"/>
</dbReference>
<dbReference type="GeneID" id="78817619"/>
<dbReference type="KEGG" id="msi:Msm_0979"/>
<dbReference type="PATRIC" id="fig|420247.28.peg.976"/>
<dbReference type="eggNOG" id="arCOG04121">
    <property type="taxonomic scope" value="Archaea"/>
</dbReference>
<dbReference type="HOGENOM" id="CLU_036532_0_4_2"/>
<dbReference type="Proteomes" id="UP000001992">
    <property type="component" value="Chromosome"/>
</dbReference>
<dbReference type="GO" id="GO:0005737">
    <property type="term" value="C:cytoplasm"/>
    <property type="evidence" value="ECO:0007669"/>
    <property type="project" value="UniProtKB-SubCell"/>
</dbReference>
<dbReference type="GO" id="GO:0032299">
    <property type="term" value="C:ribonuclease H2 complex"/>
    <property type="evidence" value="ECO:0007669"/>
    <property type="project" value="TreeGrafter"/>
</dbReference>
<dbReference type="GO" id="GO:0030145">
    <property type="term" value="F:manganese ion binding"/>
    <property type="evidence" value="ECO:0007669"/>
    <property type="project" value="UniProtKB-UniRule"/>
</dbReference>
<dbReference type="GO" id="GO:0003723">
    <property type="term" value="F:RNA binding"/>
    <property type="evidence" value="ECO:0007669"/>
    <property type="project" value="InterPro"/>
</dbReference>
<dbReference type="GO" id="GO:0004523">
    <property type="term" value="F:RNA-DNA hybrid ribonuclease activity"/>
    <property type="evidence" value="ECO:0007669"/>
    <property type="project" value="UniProtKB-UniRule"/>
</dbReference>
<dbReference type="GO" id="GO:0043137">
    <property type="term" value="P:DNA replication, removal of RNA primer"/>
    <property type="evidence" value="ECO:0007669"/>
    <property type="project" value="TreeGrafter"/>
</dbReference>
<dbReference type="GO" id="GO:0006298">
    <property type="term" value="P:mismatch repair"/>
    <property type="evidence" value="ECO:0007669"/>
    <property type="project" value="TreeGrafter"/>
</dbReference>
<dbReference type="CDD" id="cd07180">
    <property type="entry name" value="RNase_HII_archaea_like"/>
    <property type="match status" value="1"/>
</dbReference>
<dbReference type="Gene3D" id="3.30.420.10">
    <property type="entry name" value="Ribonuclease H-like superfamily/Ribonuclease H"/>
    <property type="match status" value="1"/>
</dbReference>
<dbReference type="Gene3D" id="1.10.10.460">
    <property type="entry name" value="Ribonuclease hii. Domain 2"/>
    <property type="match status" value="1"/>
</dbReference>
<dbReference type="HAMAP" id="MF_00052_A">
    <property type="entry name" value="RNase_HII_A"/>
    <property type="match status" value="1"/>
</dbReference>
<dbReference type="InterPro" id="IPR004649">
    <property type="entry name" value="RNase_H2_suA"/>
</dbReference>
<dbReference type="InterPro" id="IPR001352">
    <property type="entry name" value="RNase_HII/HIII"/>
</dbReference>
<dbReference type="InterPro" id="IPR024567">
    <property type="entry name" value="RNase_HII/HIII_dom"/>
</dbReference>
<dbReference type="InterPro" id="IPR020787">
    <property type="entry name" value="RNase_HII_arc"/>
</dbReference>
<dbReference type="InterPro" id="IPR023160">
    <property type="entry name" value="RNase_HII_hlx-loop-hlx_cap_dom"/>
</dbReference>
<dbReference type="InterPro" id="IPR012337">
    <property type="entry name" value="RNaseH-like_sf"/>
</dbReference>
<dbReference type="InterPro" id="IPR036397">
    <property type="entry name" value="RNaseH_sf"/>
</dbReference>
<dbReference type="NCBIfam" id="TIGR00729">
    <property type="entry name" value="ribonuclease HII"/>
    <property type="match status" value="1"/>
</dbReference>
<dbReference type="PANTHER" id="PTHR10954:SF23">
    <property type="entry name" value="RIBONUCLEASE"/>
    <property type="match status" value="1"/>
</dbReference>
<dbReference type="PANTHER" id="PTHR10954">
    <property type="entry name" value="RIBONUCLEASE H2 SUBUNIT A"/>
    <property type="match status" value="1"/>
</dbReference>
<dbReference type="Pfam" id="PF01351">
    <property type="entry name" value="RNase_HII"/>
    <property type="match status" value="1"/>
</dbReference>
<dbReference type="SUPFAM" id="SSF53098">
    <property type="entry name" value="Ribonuclease H-like"/>
    <property type="match status" value="1"/>
</dbReference>
<dbReference type="PROSITE" id="PS51975">
    <property type="entry name" value="RNASE_H_2"/>
    <property type="match status" value="1"/>
</dbReference>
<sequence>MDVLGIDEAGRGSVLGPLVIAGVIVPEKMDIVLERMGVKDSKRLTPNRRTILSRKLKKMFEYDLVVISAQDIDNMRADGINLNEIERIGMEKILSNLNPEKAIVDAVDIKAERFQNKLANDTGVNVVAEHKADDNYIEVSAASIIAKQERDAHIAEINKDYIKMGGIGSGYPSDPITKKFLTNFTYDEMPDFVRKSWATVEKMKNSQ</sequence>
<protein>
    <recommendedName>
        <fullName evidence="1">Ribonuclease HII</fullName>
        <shortName evidence="1">RNase HII</shortName>
        <ecNumber evidence="1">3.1.26.4</ecNumber>
    </recommendedName>
</protein>
<gene>
    <name evidence="1" type="primary">rnhB</name>
    <name type="ordered locus">Msm_0979</name>
</gene>
<accession>A5ULV6</accession>
<comment type="function">
    <text evidence="1">Endonuclease that specifically degrades the RNA of RNA-DNA hybrids.</text>
</comment>
<comment type="catalytic activity">
    <reaction evidence="1">
        <text>Endonucleolytic cleavage to 5'-phosphomonoester.</text>
        <dbReference type="EC" id="3.1.26.4"/>
    </reaction>
</comment>
<comment type="cofactor">
    <cofactor evidence="1">
        <name>Mn(2+)</name>
        <dbReference type="ChEBI" id="CHEBI:29035"/>
    </cofactor>
    <cofactor evidence="1">
        <name>Mg(2+)</name>
        <dbReference type="ChEBI" id="CHEBI:18420"/>
    </cofactor>
    <text evidence="1">Manganese or magnesium. Binds 1 divalent metal ion per monomer in the absence of substrate. May bind a second metal ion after substrate binding.</text>
</comment>
<comment type="subcellular location">
    <subcellularLocation>
        <location evidence="1">Cytoplasm</location>
    </subcellularLocation>
</comment>
<comment type="similarity">
    <text evidence="1">Belongs to the RNase HII family.</text>
</comment>